<feature type="chain" id="PRO_0000207767" description="Photosystem I reaction center subunit XII">
    <location>
        <begin position="1"/>
        <end position="30"/>
    </location>
</feature>
<feature type="transmembrane region" description="Helical" evidence="1">
    <location>
        <begin position="7"/>
        <end position="29"/>
    </location>
</feature>
<evidence type="ECO:0000255" key="1">
    <source>
        <dbReference type="HAMAP-Rule" id="MF_00828"/>
    </source>
</evidence>
<comment type="subcellular location">
    <subcellularLocation>
        <location evidence="1">Plastid</location>
        <location evidence="1">Chloroplast thylakoid membrane</location>
        <topology evidence="1">Single-pass membrane protein</topology>
    </subcellularLocation>
</comment>
<comment type="similarity">
    <text evidence="1">Belongs to the PsaM family.</text>
</comment>
<dbReference type="EMBL" id="D17510">
    <property type="protein sequence ID" value="BAA04316.1"/>
    <property type="molecule type" value="Genomic_DNA"/>
</dbReference>
<dbReference type="EMBL" id="D17510">
    <property type="protein sequence ID" value="BAA04383.1"/>
    <property type="molecule type" value="Genomic_DNA"/>
</dbReference>
<dbReference type="PIR" id="T07505">
    <property type="entry name" value="T07505"/>
</dbReference>
<dbReference type="SMR" id="P41601"/>
<dbReference type="GO" id="GO:0009535">
    <property type="term" value="C:chloroplast thylakoid membrane"/>
    <property type="evidence" value="ECO:0007669"/>
    <property type="project" value="UniProtKB-SubCell"/>
</dbReference>
<dbReference type="GO" id="GO:0009522">
    <property type="term" value="C:photosystem I"/>
    <property type="evidence" value="ECO:0007669"/>
    <property type="project" value="UniProtKB-KW"/>
</dbReference>
<dbReference type="GO" id="GO:0015979">
    <property type="term" value="P:photosynthesis"/>
    <property type="evidence" value="ECO:0007669"/>
    <property type="project" value="UniProtKB-UniRule"/>
</dbReference>
<dbReference type="HAMAP" id="MF_00828">
    <property type="entry name" value="PSI_PsaM"/>
    <property type="match status" value="1"/>
</dbReference>
<dbReference type="InterPro" id="IPR010010">
    <property type="entry name" value="PSI_PsaM"/>
</dbReference>
<dbReference type="NCBIfam" id="TIGR03053">
    <property type="entry name" value="PS_I_psaM"/>
    <property type="match status" value="1"/>
</dbReference>
<dbReference type="Pfam" id="PF07465">
    <property type="entry name" value="PsaM"/>
    <property type="match status" value="1"/>
</dbReference>
<keyword id="KW-0150">Chloroplast</keyword>
<keyword id="KW-0472">Membrane</keyword>
<keyword id="KW-0602">Photosynthesis</keyword>
<keyword id="KW-0603">Photosystem I</keyword>
<keyword id="KW-0934">Plastid</keyword>
<keyword id="KW-0793">Thylakoid</keyword>
<keyword id="KW-0812">Transmembrane</keyword>
<keyword id="KW-1133">Transmembrane helix</keyword>
<geneLocation type="chloroplast"/>
<organism>
    <name type="scientific">Pinus thunbergii</name>
    <name type="common">Japanese black pine</name>
    <name type="synonym">Pinus thunbergiana</name>
    <dbReference type="NCBI Taxonomy" id="3350"/>
    <lineage>
        <taxon>Eukaryota</taxon>
        <taxon>Viridiplantae</taxon>
        <taxon>Streptophyta</taxon>
        <taxon>Embryophyta</taxon>
        <taxon>Tracheophyta</taxon>
        <taxon>Spermatophyta</taxon>
        <taxon>Pinopsida</taxon>
        <taxon>Pinidae</taxon>
        <taxon>Conifers I</taxon>
        <taxon>Pinales</taxon>
        <taxon>Pinaceae</taxon>
        <taxon>Pinus</taxon>
        <taxon>Pinus subgen. Pinus</taxon>
    </lineage>
</organism>
<sequence length="30" mass="3321">MVELKFLIAFFLAFTAGILAIKLGQALYDC</sequence>
<accession>P41601</accession>
<protein>
    <recommendedName>
        <fullName evidence="1">Photosystem I reaction center subunit XII</fullName>
    </recommendedName>
    <alternativeName>
        <fullName evidence="1">PSI-M</fullName>
    </alternativeName>
</protein>
<reference key="1">
    <citation type="journal article" date="1994" name="Proc. Natl. Acad. Sci. U.S.A.">
        <title>Loss of all ndh genes as determined by sequencing the entire chloroplast genome of the black pine Pinus thunbergii.</title>
        <authorList>
            <person name="Wakasugi T."/>
            <person name="Tsudzuki J."/>
            <person name="Ito S."/>
            <person name="Nakashima K."/>
            <person name="Tsudzuki T."/>
            <person name="Sugiura M."/>
        </authorList>
    </citation>
    <scope>NUCLEOTIDE SEQUENCE [LARGE SCALE GENOMIC DNA]</scope>
</reference>
<name>PSAM_PINTH</name>
<proteinExistence type="inferred from homology"/>
<gene>
    <name evidence="1" type="primary">psaM-A</name>
</gene>
<gene>
    <name evidence="1" type="primary">psaM-B</name>
</gene>